<organism>
    <name type="scientific">Escherichia coli O139:H28 (strain E24377A / ETEC)</name>
    <dbReference type="NCBI Taxonomy" id="331111"/>
    <lineage>
        <taxon>Bacteria</taxon>
        <taxon>Pseudomonadati</taxon>
        <taxon>Pseudomonadota</taxon>
        <taxon>Gammaproteobacteria</taxon>
        <taxon>Enterobacterales</taxon>
        <taxon>Enterobacteriaceae</taxon>
        <taxon>Escherichia</taxon>
    </lineage>
</organism>
<accession>A7ZMK7</accession>
<comment type="function">
    <text evidence="1">Catalyzes the ATP-dependent amidation of deamido-NAD to form NAD. Uses ammonia as a nitrogen source.</text>
</comment>
<comment type="catalytic activity">
    <reaction evidence="1">
        <text>deamido-NAD(+) + NH4(+) + ATP = AMP + diphosphate + NAD(+) + H(+)</text>
        <dbReference type="Rhea" id="RHEA:21188"/>
        <dbReference type="ChEBI" id="CHEBI:15378"/>
        <dbReference type="ChEBI" id="CHEBI:28938"/>
        <dbReference type="ChEBI" id="CHEBI:30616"/>
        <dbReference type="ChEBI" id="CHEBI:33019"/>
        <dbReference type="ChEBI" id="CHEBI:57540"/>
        <dbReference type="ChEBI" id="CHEBI:58437"/>
        <dbReference type="ChEBI" id="CHEBI:456215"/>
        <dbReference type="EC" id="6.3.1.5"/>
    </reaction>
</comment>
<comment type="pathway">
    <text evidence="1">Cofactor biosynthesis; NAD(+) biosynthesis; NAD(+) from deamido-NAD(+) (ammonia route): step 1/1.</text>
</comment>
<comment type="subunit">
    <text evidence="1">Homodimer.</text>
</comment>
<comment type="similarity">
    <text evidence="1">Belongs to the NAD synthetase family.</text>
</comment>
<gene>
    <name evidence="1" type="primary">nadE</name>
    <name type="ordered locus">EcE24377A_1961</name>
</gene>
<proteinExistence type="inferred from homology"/>
<sequence length="275" mass="30638">MTLQQQIIKALGAKPQINAEEEIRRSIDFLKSYLQTYPFIKSLVLGISGGQDSTLAGKLCQMAINELRLETGNESLQFIAVRLPYGVQADEQDCQDAIAFIQPDRVLTVNIKGAVLASEQALREAGIELSDFVRGNEKARERMKAQYSIAGMTSGVVVGTDHAAEAITGFFTKYGDGGTDINPLYRLNKRQGKQLLAALGCPEHLYKKAPTADLEDDRPSLPDEVALGVTYDNIDDYLEGKNVPEQVARTIENWYLKTEHKRRPPITVFDDFWKK</sequence>
<name>NADE_ECO24</name>
<dbReference type="EC" id="6.3.1.5" evidence="1"/>
<dbReference type="EMBL" id="CP000800">
    <property type="protein sequence ID" value="ABV19336.1"/>
    <property type="molecule type" value="Genomic_DNA"/>
</dbReference>
<dbReference type="RefSeq" id="WP_000175009.1">
    <property type="nucleotide sequence ID" value="NC_009801.1"/>
</dbReference>
<dbReference type="SMR" id="A7ZMK7"/>
<dbReference type="GeneID" id="75203046"/>
<dbReference type="KEGG" id="ecw:EcE24377A_1961"/>
<dbReference type="HOGENOM" id="CLU_059327_3_0_6"/>
<dbReference type="UniPathway" id="UPA00253">
    <property type="reaction ID" value="UER00333"/>
</dbReference>
<dbReference type="Proteomes" id="UP000001122">
    <property type="component" value="Chromosome"/>
</dbReference>
<dbReference type="GO" id="GO:0005737">
    <property type="term" value="C:cytoplasm"/>
    <property type="evidence" value="ECO:0007669"/>
    <property type="project" value="InterPro"/>
</dbReference>
<dbReference type="GO" id="GO:0005524">
    <property type="term" value="F:ATP binding"/>
    <property type="evidence" value="ECO:0007669"/>
    <property type="project" value="UniProtKB-UniRule"/>
</dbReference>
<dbReference type="GO" id="GO:0004359">
    <property type="term" value="F:glutaminase activity"/>
    <property type="evidence" value="ECO:0007669"/>
    <property type="project" value="InterPro"/>
</dbReference>
<dbReference type="GO" id="GO:0046872">
    <property type="term" value="F:metal ion binding"/>
    <property type="evidence" value="ECO:0007669"/>
    <property type="project" value="UniProtKB-KW"/>
</dbReference>
<dbReference type="GO" id="GO:0003952">
    <property type="term" value="F:NAD+ synthase (glutamine-hydrolyzing) activity"/>
    <property type="evidence" value="ECO:0007669"/>
    <property type="project" value="InterPro"/>
</dbReference>
<dbReference type="GO" id="GO:0008795">
    <property type="term" value="F:NAD+ synthase activity"/>
    <property type="evidence" value="ECO:0007669"/>
    <property type="project" value="UniProtKB-UniRule"/>
</dbReference>
<dbReference type="GO" id="GO:0009435">
    <property type="term" value="P:NAD biosynthetic process"/>
    <property type="evidence" value="ECO:0007669"/>
    <property type="project" value="UniProtKB-UniRule"/>
</dbReference>
<dbReference type="CDD" id="cd00553">
    <property type="entry name" value="NAD_synthase"/>
    <property type="match status" value="1"/>
</dbReference>
<dbReference type="FunFam" id="3.40.50.620:FF:000015">
    <property type="entry name" value="NH(3)-dependent NAD(+) synthetase"/>
    <property type="match status" value="1"/>
</dbReference>
<dbReference type="Gene3D" id="3.40.50.620">
    <property type="entry name" value="HUPs"/>
    <property type="match status" value="1"/>
</dbReference>
<dbReference type="HAMAP" id="MF_00193">
    <property type="entry name" value="NadE_ammonia_dep"/>
    <property type="match status" value="1"/>
</dbReference>
<dbReference type="InterPro" id="IPR022310">
    <property type="entry name" value="NAD/GMP_synthase"/>
</dbReference>
<dbReference type="InterPro" id="IPR003694">
    <property type="entry name" value="NAD_synthase"/>
</dbReference>
<dbReference type="InterPro" id="IPR022926">
    <property type="entry name" value="NH(3)-dep_NAD(+)_synth"/>
</dbReference>
<dbReference type="InterPro" id="IPR014729">
    <property type="entry name" value="Rossmann-like_a/b/a_fold"/>
</dbReference>
<dbReference type="NCBIfam" id="TIGR00552">
    <property type="entry name" value="nadE"/>
    <property type="match status" value="1"/>
</dbReference>
<dbReference type="NCBIfam" id="NF001979">
    <property type="entry name" value="PRK00768.1"/>
    <property type="match status" value="1"/>
</dbReference>
<dbReference type="PANTHER" id="PTHR23090">
    <property type="entry name" value="NH 3 /GLUTAMINE-DEPENDENT NAD + SYNTHETASE"/>
    <property type="match status" value="1"/>
</dbReference>
<dbReference type="PANTHER" id="PTHR23090:SF7">
    <property type="entry name" value="NH(3)-DEPENDENT NAD(+) SYNTHETASE"/>
    <property type="match status" value="1"/>
</dbReference>
<dbReference type="Pfam" id="PF02540">
    <property type="entry name" value="NAD_synthase"/>
    <property type="match status" value="1"/>
</dbReference>
<dbReference type="SUPFAM" id="SSF52402">
    <property type="entry name" value="Adenine nucleotide alpha hydrolases-like"/>
    <property type="match status" value="1"/>
</dbReference>
<feature type="chain" id="PRO_1000077549" description="NH(3)-dependent NAD(+) synthetase">
    <location>
        <begin position="1"/>
        <end position="275"/>
    </location>
</feature>
<feature type="binding site" evidence="1">
    <location>
        <begin position="46"/>
        <end position="53"/>
    </location>
    <ligand>
        <name>ATP</name>
        <dbReference type="ChEBI" id="CHEBI:30616"/>
    </ligand>
</feature>
<feature type="binding site" evidence="1">
    <location>
        <position position="52"/>
    </location>
    <ligand>
        <name>Mg(2+)</name>
        <dbReference type="ChEBI" id="CHEBI:18420"/>
    </ligand>
</feature>
<feature type="binding site" evidence="1">
    <location>
        <position position="140"/>
    </location>
    <ligand>
        <name>deamido-NAD(+)</name>
        <dbReference type="ChEBI" id="CHEBI:58437"/>
    </ligand>
</feature>
<feature type="binding site" evidence="1">
    <location>
        <position position="160"/>
    </location>
    <ligand>
        <name>ATP</name>
        <dbReference type="ChEBI" id="CHEBI:30616"/>
    </ligand>
</feature>
<feature type="binding site" evidence="1">
    <location>
        <position position="165"/>
    </location>
    <ligand>
        <name>Mg(2+)</name>
        <dbReference type="ChEBI" id="CHEBI:18420"/>
    </ligand>
</feature>
<feature type="binding site" evidence="1">
    <location>
        <position position="173"/>
    </location>
    <ligand>
        <name>deamido-NAD(+)</name>
        <dbReference type="ChEBI" id="CHEBI:58437"/>
    </ligand>
</feature>
<feature type="binding site" evidence="1">
    <location>
        <position position="180"/>
    </location>
    <ligand>
        <name>deamido-NAD(+)</name>
        <dbReference type="ChEBI" id="CHEBI:58437"/>
    </ligand>
</feature>
<feature type="binding site" evidence="1">
    <location>
        <position position="189"/>
    </location>
    <ligand>
        <name>ATP</name>
        <dbReference type="ChEBI" id="CHEBI:30616"/>
    </ligand>
</feature>
<feature type="binding site" evidence="1">
    <location>
        <position position="211"/>
    </location>
    <ligand>
        <name>ATP</name>
        <dbReference type="ChEBI" id="CHEBI:30616"/>
    </ligand>
</feature>
<feature type="binding site" evidence="1">
    <location>
        <begin position="260"/>
        <end position="261"/>
    </location>
    <ligand>
        <name>deamido-NAD(+)</name>
        <dbReference type="ChEBI" id="CHEBI:58437"/>
    </ligand>
</feature>
<protein>
    <recommendedName>
        <fullName evidence="1">NH(3)-dependent NAD(+) synthetase</fullName>
        <ecNumber evidence="1">6.3.1.5</ecNumber>
    </recommendedName>
</protein>
<reference key="1">
    <citation type="journal article" date="2008" name="J. Bacteriol.">
        <title>The pangenome structure of Escherichia coli: comparative genomic analysis of E. coli commensal and pathogenic isolates.</title>
        <authorList>
            <person name="Rasko D.A."/>
            <person name="Rosovitz M.J."/>
            <person name="Myers G.S.A."/>
            <person name="Mongodin E.F."/>
            <person name="Fricke W.F."/>
            <person name="Gajer P."/>
            <person name="Crabtree J."/>
            <person name="Sebaihia M."/>
            <person name="Thomson N.R."/>
            <person name="Chaudhuri R."/>
            <person name="Henderson I.R."/>
            <person name="Sperandio V."/>
            <person name="Ravel J."/>
        </authorList>
    </citation>
    <scope>NUCLEOTIDE SEQUENCE [LARGE SCALE GENOMIC DNA]</scope>
    <source>
        <strain>E24377A / ETEC</strain>
    </source>
</reference>
<keyword id="KW-0067">ATP-binding</keyword>
<keyword id="KW-0436">Ligase</keyword>
<keyword id="KW-0460">Magnesium</keyword>
<keyword id="KW-0479">Metal-binding</keyword>
<keyword id="KW-0520">NAD</keyword>
<keyword id="KW-0547">Nucleotide-binding</keyword>
<keyword id="KW-1185">Reference proteome</keyword>
<evidence type="ECO:0000255" key="1">
    <source>
        <dbReference type="HAMAP-Rule" id="MF_00193"/>
    </source>
</evidence>